<gene>
    <name evidence="1" type="primary">cbpA</name>
    <name type="ordered locus">CKO_02066</name>
</gene>
<sequence length="306" mass="34453">MELKDYYAIMGVKPTDDLKTIKTAYRRLARKYHPDVSKEPDAEARFKEVAEAWEVLSDEQRRAEYDQLWQHRNDPQFNRQFQQGEGQSYNAEDFDDIFSSIFGQHGQQSRQRQATRGHDIEIEVAVFLEETLAEHSRTISYNLPVYNAFGLVEREIPKTLNVKIPAGVGNGQRIRLKGQGTPGENGGPNGDLWLVIHIAPHPLFDIVNQDLEIVVPLAPWEAALGAKVAVPTLKEKILLTIPPGSQAGQRLRIRGKGLVSKKHTGDLYAVIKIVMPPKPDDSATALWQQLADAQSSFDPRKEWGKA</sequence>
<keyword id="KW-0143">Chaperone</keyword>
<keyword id="KW-0963">Cytoplasm</keyword>
<keyword id="KW-0238">DNA-binding</keyword>
<keyword id="KW-1185">Reference proteome</keyword>
<evidence type="ECO:0000255" key="1">
    <source>
        <dbReference type="HAMAP-Rule" id="MF_01154"/>
    </source>
</evidence>
<reference key="1">
    <citation type="submission" date="2007-08" db="EMBL/GenBank/DDBJ databases">
        <authorList>
            <consortium name="The Citrobacter koseri Genome Sequencing Project"/>
            <person name="McClelland M."/>
            <person name="Sanderson E.K."/>
            <person name="Porwollik S."/>
            <person name="Spieth J."/>
            <person name="Clifton W.S."/>
            <person name="Latreille P."/>
            <person name="Courtney L."/>
            <person name="Wang C."/>
            <person name="Pepin K."/>
            <person name="Bhonagiri V."/>
            <person name="Nash W."/>
            <person name="Johnson M."/>
            <person name="Thiruvilangam P."/>
            <person name="Wilson R."/>
        </authorList>
    </citation>
    <scope>NUCLEOTIDE SEQUENCE [LARGE SCALE GENOMIC DNA]</scope>
    <source>
        <strain>ATCC BAA-895 / CDC 4225-83 / SGSC4696</strain>
    </source>
</reference>
<protein>
    <recommendedName>
        <fullName evidence="1">Curved DNA-binding protein</fullName>
    </recommendedName>
</protein>
<organism>
    <name type="scientific">Citrobacter koseri (strain ATCC BAA-895 / CDC 4225-83 / SGSC4696)</name>
    <dbReference type="NCBI Taxonomy" id="290338"/>
    <lineage>
        <taxon>Bacteria</taxon>
        <taxon>Pseudomonadati</taxon>
        <taxon>Pseudomonadota</taxon>
        <taxon>Gammaproteobacteria</taxon>
        <taxon>Enterobacterales</taxon>
        <taxon>Enterobacteriaceae</taxon>
        <taxon>Citrobacter</taxon>
    </lineage>
</organism>
<name>CBPA_CITK8</name>
<comment type="function">
    <text evidence="1">DNA-binding protein that preferentially recognizes a curved DNA sequence. It is probably a functional analog of DnaJ; displays overlapping activities with DnaJ, but functions under different conditions, probably acting as a molecular chaperone in an adaptive response to environmental stresses other than heat shock. Lacks autonomous chaperone activity; binds native substrates and targets them for recognition by DnaK. Its activity is inhibited by the binding of CbpM.</text>
</comment>
<comment type="subcellular location">
    <subcellularLocation>
        <location evidence="1">Cytoplasm</location>
        <location evidence="1">Nucleoid</location>
    </subcellularLocation>
</comment>
<dbReference type="EMBL" id="CP000822">
    <property type="protein sequence ID" value="ABV13191.1"/>
    <property type="molecule type" value="Genomic_DNA"/>
</dbReference>
<dbReference type="RefSeq" id="WP_012132923.1">
    <property type="nucleotide sequence ID" value="NC_009792.1"/>
</dbReference>
<dbReference type="BMRB" id="A8AI78"/>
<dbReference type="SMR" id="A8AI78"/>
<dbReference type="STRING" id="290338.CKO_02066"/>
<dbReference type="GeneID" id="45136023"/>
<dbReference type="KEGG" id="cko:CKO_02066"/>
<dbReference type="HOGENOM" id="CLU_017633_0_0_6"/>
<dbReference type="OrthoDB" id="9779889at2"/>
<dbReference type="Proteomes" id="UP000008148">
    <property type="component" value="Chromosome"/>
</dbReference>
<dbReference type="GO" id="GO:0005737">
    <property type="term" value="C:cytoplasm"/>
    <property type="evidence" value="ECO:0007669"/>
    <property type="project" value="UniProtKB-UniRule"/>
</dbReference>
<dbReference type="GO" id="GO:0009295">
    <property type="term" value="C:nucleoid"/>
    <property type="evidence" value="ECO:0007669"/>
    <property type="project" value="UniProtKB-SubCell"/>
</dbReference>
<dbReference type="GO" id="GO:0003681">
    <property type="term" value="F:bent DNA binding"/>
    <property type="evidence" value="ECO:0007669"/>
    <property type="project" value="UniProtKB-UniRule"/>
</dbReference>
<dbReference type="GO" id="GO:0051082">
    <property type="term" value="F:unfolded protein binding"/>
    <property type="evidence" value="ECO:0007669"/>
    <property type="project" value="InterPro"/>
</dbReference>
<dbReference type="GO" id="GO:0051085">
    <property type="term" value="P:chaperone cofactor-dependent protein refolding"/>
    <property type="evidence" value="ECO:0007669"/>
    <property type="project" value="TreeGrafter"/>
</dbReference>
<dbReference type="GO" id="GO:0042026">
    <property type="term" value="P:protein refolding"/>
    <property type="evidence" value="ECO:0007669"/>
    <property type="project" value="TreeGrafter"/>
</dbReference>
<dbReference type="CDD" id="cd06257">
    <property type="entry name" value="DnaJ"/>
    <property type="match status" value="1"/>
</dbReference>
<dbReference type="CDD" id="cd10747">
    <property type="entry name" value="DnaJ_C"/>
    <property type="match status" value="1"/>
</dbReference>
<dbReference type="FunFam" id="1.10.287.110:FF:000013">
    <property type="entry name" value="Curved DNA-binding protein"/>
    <property type="match status" value="1"/>
</dbReference>
<dbReference type="FunFam" id="2.60.260.20:FF:000008">
    <property type="entry name" value="Curved DNA-binding protein"/>
    <property type="match status" value="1"/>
</dbReference>
<dbReference type="Gene3D" id="1.10.287.110">
    <property type="entry name" value="DnaJ domain"/>
    <property type="match status" value="1"/>
</dbReference>
<dbReference type="Gene3D" id="1.20.5.460">
    <property type="entry name" value="Single helix bin"/>
    <property type="match status" value="1"/>
</dbReference>
<dbReference type="Gene3D" id="2.60.260.20">
    <property type="entry name" value="Urease metallochaperone UreE, N-terminal domain"/>
    <property type="match status" value="2"/>
</dbReference>
<dbReference type="HAMAP" id="MF_01154">
    <property type="entry name" value="CbpA"/>
    <property type="match status" value="1"/>
</dbReference>
<dbReference type="InterPro" id="IPR023859">
    <property type="entry name" value="DNA-bd_curved-DNA"/>
</dbReference>
<dbReference type="InterPro" id="IPR002939">
    <property type="entry name" value="DnaJ_C"/>
</dbReference>
<dbReference type="InterPro" id="IPR001623">
    <property type="entry name" value="DnaJ_domain"/>
</dbReference>
<dbReference type="InterPro" id="IPR018253">
    <property type="entry name" value="DnaJ_domain_CS"/>
</dbReference>
<dbReference type="InterPro" id="IPR008971">
    <property type="entry name" value="HSP40/DnaJ_pept-bd"/>
</dbReference>
<dbReference type="InterPro" id="IPR036869">
    <property type="entry name" value="J_dom_sf"/>
</dbReference>
<dbReference type="NCBIfam" id="NF007618">
    <property type="entry name" value="PRK10266.1"/>
    <property type="match status" value="1"/>
</dbReference>
<dbReference type="PANTHER" id="PTHR43096">
    <property type="entry name" value="DNAJ HOMOLOG 1, MITOCHONDRIAL-RELATED"/>
    <property type="match status" value="1"/>
</dbReference>
<dbReference type="PANTHER" id="PTHR43096:SF52">
    <property type="entry name" value="DNAJ HOMOLOG 1, MITOCHONDRIAL-RELATED"/>
    <property type="match status" value="1"/>
</dbReference>
<dbReference type="Pfam" id="PF00226">
    <property type="entry name" value="DnaJ"/>
    <property type="match status" value="1"/>
</dbReference>
<dbReference type="Pfam" id="PF01556">
    <property type="entry name" value="DnaJ_C"/>
    <property type="match status" value="1"/>
</dbReference>
<dbReference type="PRINTS" id="PR00625">
    <property type="entry name" value="JDOMAIN"/>
</dbReference>
<dbReference type="SMART" id="SM00271">
    <property type="entry name" value="DnaJ"/>
    <property type="match status" value="1"/>
</dbReference>
<dbReference type="SUPFAM" id="SSF46565">
    <property type="entry name" value="Chaperone J-domain"/>
    <property type="match status" value="1"/>
</dbReference>
<dbReference type="SUPFAM" id="SSF49493">
    <property type="entry name" value="HSP40/DnaJ peptide-binding domain"/>
    <property type="match status" value="2"/>
</dbReference>
<dbReference type="PROSITE" id="PS00636">
    <property type="entry name" value="DNAJ_1"/>
    <property type="match status" value="1"/>
</dbReference>
<dbReference type="PROSITE" id="PS50076">
    <property type="entry name" value="DNAJ_2"/>
    <property type="match status" value="1"/>
</dbReference>
<proteinExistence type="inferred from homology"/>
<accession>A8AI78</accession>
<feature type="chain" id="PRO_1000065525" description="Curved DNA-binding protein">
    <location>
        <begin position="1"/>
        <end position="306"/>
    </location>
</feature>
<feature type="domain" description="J" evidence="1">
    <location>
        <begin position="5"/>
        <end position="69"/>
    </location>
</feature>